<organism>
    <name type="scientific">Pan troglodytes</name>
    <name type="common">Chimpanzee</name>
    <dbReference type="NCBI Taxonomy" id="9598"/>
    <lineage>
        <taxon>Eukaryota</taxon>
        <taxon>Metazoa</taxon>
        <taxon>Chordata</taxon>
        <taxon>Craniata</taxon>
        <taxon>Vertebrata</taxon>
        <taxon>Euteleostomi</taxon>
        <taxon>Mammalia</taxon>
        <taxon>Eutheria</taxon>
        <taxon>Euarchontoglires</taxon>
        <taxon>Primates</taxon>
        <taxon>Haplorrhini</taxon>
        <taxon>Catarrhini</taxon>
        <taxon>Hominidae</taxon>
        <taxon>Pan</taxon>
    </lineage>
</organism>
<evidence type="ECO:0000250" key="1"/>
<evidence type="ECO:0000250" key="2">
    <source>
        <dbReference type="UniProtKB" id="Q15014"/>
    </source>
</evidence>
<evidence type="ECO:0000255" key="3">
    <source>
        <dbReference type="PROSITE-ProRule" id="PRU00972"/>
    </source>
</evidence>
<evidence type="ECO:0000256" key="4">
    <source>
        <dbReference type="SAM" id="MobiDB-lite"/>
    </source>
</evidence>
<reference key="1">
    <citation type="journal article" date="2007" name="Gene">
        <title>Mapping of chimpanzee full-length cDNAs onto the human genome unveils large potential divergence of the transcriptome.</title>
        <authorList>
            <person name="Sakate R."/>
            <person name="Suto Y."/>
            <person name="Imanishi T."/>
            <person name="Tanoue T."/>
            <person name="Hida M."/>
            <person name="Hayasaka I."/>
            <person name="Kusuda J."/>
            <person name="Gojobori T."/>
            <person name="Hashimoto K."/>
            <person name="Hirai M."/>
        </authorList>
    </citation>
    <scope>NUCLEOTIDE SEQUENCE [MRNA]</scope>
    <source>
        <tissue>Brain</tissue>
    </source>
</reference>
<keyword id="KW-0156">Chromatin regulator</keyword>
<keyword id="KW-0227">DNA damage</keyword>
<keyword id="KW-0234">DNA repair</keyword>
<keyword id="KW-0341">Growth regulation</keyword>
<keyword id="KW-0539">Nucleus</keyword>
<keyword id="KW-0597">Phosphoprotein</keyword>
<keyword id="KW-1185">Reference proteome</keyword>
<keyword id="KW-0804">Transcription</keyword>
<keyword id="KW-0805">Transcription regulation</keyword>
<sequence length="288" mass="32308">MSSRKQGSQPRGQQSAEEENFKKPTRSNMQRSKMRGASSGKKTAGPQQKNLEPALPGRWGGRSAENPPSGSVRKTRKNKQKTPGNGDGGSTSEAPQPPRKKRARADPTVESEEAFKNRMEVKVKIPEELKPWLVEDWDLVTRQKQLFQLPAKKNVDAILEEYANCKKSQGNVDNKEYAVNEVVAGIKEYFNVMLGTQLLYKFERPQYAEILLAHPDAPMSQVYGAPHLLRLFVRIGAMLAYTPLDEKSLALLLGYLHDFLKYLAKNSASLFTASDYKVASAEYHRKAL</sequence>
<accession>A5A6J5</accession>
<protein>
    <recommendedName>
        <fullName>Mortality factor 4-like protein 2</fullName>
    </recommendedName>
</protein>
<name>MO4L2_PANTR</name>
<dbReference type="EMBL" id="AB222123">
    <property type="protein sequence ID" value="BAF62368.1"/>
    <property type="molecule type" value="mRNA"/>
</dbReference>
<dbReference type="RefSeq" id="NP_001092032.1">
    <property type="nucleotide sequence ID" value="NM_001098562.1"/>
</dbReference>
<dbReference type="RefSeq" id="XP_009437670.1">
    <property type="nucleotide sequence ID" value="XM_009439395.3"/>
</dbReference>
<dbReference type="RefSeq" id="XP_009437671.1">
    <property type="nucleotide sequence ID" value="XM_009439396.3"/>
</dbReference>
<dbReference type="RefSeq" id="XP_009437672.1">
    <property type="nucleotide sequence ID" value="XM_009439397.2"/>
</dbReference>
<dbReference type="RefSeq" id="XP_009437673.1">
    <property type="nucleotide sequence ID" value="XM_009439398.3"/>
</dbReference>
<dbReference type="RefSeq" id="XP_009437674.1">
    <property type="nucleotide sequence ID" value="XM_009439399.3"/>
</dbReference>
<dbReference type="RefSeq" id="XP_009437675.1">
    <property type="nucleotide sequence ID" value="XM_009439400.3"/>
</dbReference>
<dbReference type="RefSeq" id="XP_009437676.1">
    <property type="nucleotide sequence ID" value="XM_009439401.4"/>
</dbReference>
<dbReference type="RefSeq" id="XP_009437677.1">
    <property type="nucleotide sequence ID" value="XM_009439402.4"/>
</dbReference>
<dbReference type="RefSeq" id="XP_009437678.1">
    <property type="nucleotide sequence ID" value="XM_009439403.3"/>
</dbReference>
<dbReference type="RefSeq" id="XP_009437679.1">
    <property type="nucleotide sequence ID" value="XM_009439404.3"/>
</dbReference>
<dbReference type="RefSeq" id="XP_009437680.1">
    <property type="nucleotide sequence ID" value="XM_009439405.3"/>
</dbReference>
<dbReference type="RefSeq" id="XP_009437681.1">
    <property type="nucleotide sequence ID" value="XM_009439406.4"/>
</dbReference>
<dbReference type="RefSeq" id="XP_009437682.1">
    <property type="nucleotide sequence ID" value="XM_009439407.3"/>
</dbReference>
<dbReference type="SMR" id="A5A6J5"/>
<dbReference type="FunCoup" id="A5A6J5">
    <property type="interactions" value="1476"/>
</dbReference>
<dbReference type="STRING" id="9598.ENSPTRP00000071035"/>
<dbReference type="PaxDb" id="9598-ENSPTRP00000042777"/>
<dbReference type="GeneID" id="465783"/>
<dbReference type="KEGG" id="ptr:465783"/>
<dbReference type="CTD" id="9643"/>
<dbReference type="eggNOG" id="KOG3001">
    <property type="taxonomic scope" value="Eukaryota"/>
</dbReference>
<dbReference type="HOGENOM" id="CLU_039566_4_0_1"/>
<dbReference type="InParanoid" id="A5A6J5"/>
<dbReference type="OrthoDB" id="3808at9604"/>
<dbReference type="TreeFam" id="TF323400"/>
<dbReference type="Proteomes" id="UP000002277">
    <property type="component" value="Unplaced"/>
</dbReference>
<dbReference type="GO" id="GO:0035267">
    <property type="term" value="C:NuA4 histone acetyltransferase complex"/>
    <property type="evidence" value="ECO:0000318"/>
    <property type="project" value="GO_Central"/>
</dbReference>
<dbReference type="GO" id="GO:0005634">
    <property type="term" value="C:nucleus"/>
    <property type="evidence" value="ECO:0007669"/>
    <property type="project" value="UniProtKB-SubCell"/>
</dbReference>
<dbReference type="GO" id="GO:0006325">
    <property type="term" value="P:chromatin organization"/>
    <property type="evidence" value="ECO:0007669"/>
    <property type="project" value="UniProtKB-KW"/>
</dbReference>
<dbReference type="GO" id="GO:0006281">
    <property type="term" value="P:DNA repair"/>
    <property type="evidence" value="ECO:0007669"/>
    <property type="project" value="UniProtKB-KW"/>
</dbReference>
<dbReference type="GO" id="GO:0006355">
    <property type="term" value="P:regulation of DNA-templated transcription"/>
    <property type="evidence" value="ECO:0007669"/>
    <property type="project" value="InterPro"/>
</dbReference>
<dbReference type="FunFam" id="1.10.274.30:FF:000001">
    <property type="entry name" value="Mortality factor 4-like protein 1"/>
    <property type="match status" value="1"/>
</dbReference>
<dbReference type="Gene3D" id="1.10.274.30">
    <property type="entry name" value="MRG domain"/>
    <property type="match status" value="1"/>
</dbReference>
<dbReference type="InterPro" id="IPR008676">
    <property type="entry name" value="MRG"/>
</dbReference>
<dbReference type="InterPro" id="IPR038217">
    <property type="entry name" value="MRG_C_sf"/>
</dbReference>
<dbReference type="InterPro" id="IPR026541">
    <property type="entry name" value="MRG_dom"/>
</dbReference>
<dbReference type="PANTHER" id="PTHR10880">
    <property type="entry name" value="MORTALITY FACTOR 4-LIKE PROTEIN"/>
    <property type="match status" value="1"/>
</dbReference>
<dbReference type="PANTHER" id="PTHR10880:SF25">
    <property type="entry name" value="MORTALITY FACTOR 4-LIKE PROTEIN 2"/>
    <property type="match status" value="1"/>
</dbReference>
<dbReference type="Pfam" id="PF05712">
    <property type="entry name" value="MRG"/>
    <property type="match status" value="1"/>
</dbReference>
<dbReference type="PROSITE" id="PS51640">
    <property type="entry name" value="MRG"/>
    <property type="match status" value="1"/>
</dbReference>
<comment type="function">
    <text evidence="1">Component of the NuA4 histone acetyltransferase complex which is involved in transcriptional activation of select genes principally by acetylation of nucleosomal histone H4 and H2A. This modification may both alter nucleosome - DNA interactions and promote interaction of the modified histones with other proteins which positively regulate transcription. This complex may be required for the activation of transcriptional programs associated with oncogene and proto-oncogene mediated growth induction, tumor suppressor mediated growth arrest and replicative senescence, apoptosis, and DNA repair. The NuA4 complex ATPase and helicase activities seem to be, at least in part, contributed by the association of RUVBL1 and RUVBL2 with EP400. NuA4 may also play a direct role in DNA repair when directly recruited to sites of DNA damage. Also a component of the MSIN3A complex which acts to repress transcription by deacetylation of nucleosomal histones (By similarity).</text>
</comment>
<comment type="subunit">
    <text evidence="1">Component of the NuA4 histone acetyltransferase complex which contains the catalytic subunit KAT5/TIP60 and the subunits EP400, TRRAP/PAF400, BRD8/SMAP, EPC1, DMAP1/DNMAP1, RUVBL1/TIP49, RUVBL2, ING3, actin, ACTL6A/BAF53A, MORF4L1/MRG15, MORF4L2/MRGX, MRGBP, YEATS4/GAS41 and VPS72/YL1. The NuA4 complex interacts with MYC and the adenovirus E1A protein. MORF4L1 may also participate in the formation of NuA4 related complexes which lack the KAT5/TIP60 catalytic subunit, but which include the SWI/SNF related protein SRCAP. Component of the MSIN3A histone deacetylase complex, which includes SIN3A, HDAC2, ARID4B, MORF4L1, RBBP4/RbAp48, and RBBP7/RbAp46. Interacts with MRFAP1 and RB1. May also interact with one or more as yet undefined members of the TLE (transducin-like enhancer of split) family of transcriptional repressors (By similarity).</text>
</comment>
<comment type="subcellular location">
    <subcellularLocation>
        <location evidence="3">Nucleus</location>
    </subcellularLocation>
</comment>
<feature type="chain" id="PRO_0000297552" description="Mortality factor 4-like protein 2">
    <location>
        <begin position="1"/>
        <end position="288"/>
    </location>
</feature>
<feature type="domain" description="MRG" evidence="3">
    <location>
        <begin position="117"/>
        <end position="288"/>
    </location>
</feature>
<feature type="region of interest" description="Disordered" evidence="4">
    <location>
        <begin position="1"/>
        <end position="113"/>
    </location>
</feature>
<feature type="compositionally biased region" description="Polar residues" evidence="4">
    <location>
        <begin position="1"/>
        <end position="15"/>
    </location>
</feature>
<feature type="modified residue" description="Phosphoserine" evidence="2">
    <location>
        <position position="71"/>
    </location>
</feature>
<gene>
    <name type="primary">MORF4L2</name>
</gene>
<proteinExistence type="evidence at transcript level"/>